<name>SMST_SANMU</name>
<protein>
    <recommendedName>
        <fullName>Probable sesquiterpene synthase</fullName>
        <shortName>SmSTPS</shortName>
        <ecNumber>4.2.3.-</ecNumber>
    </recommendedName>
</protein>
<keyword id="KW-0456">Lyase</keyword>
<keyword id="KW-0460">Magnesium</keyword>
<keyword id="KW-0464">Manganese</keyword>
<keyword id="KW-0479">Metal-binding</keyword>
<reference key="1">
    <citation type="journal article" date="2011" name="J. Biol. Chem.">
        <title>Sandalwood fragrance biosynthesis involves sesquiterpene synthases of both the terpene synthase (TPS)-a and TPS-b Subfamilies, including santalene synthases.</title>
        <authorList>
            <person name="Jones C.G."/>
            <person name="Moniodis J."/>
            <person name="Zulak K.G."/>
            <person name="Scaffidi A."/>
            <person name="Plummer J.A."/>
            <person name="Ghisalberti E.L."/>
            <person name="Barbour E.L."/>
            <person name="Bohlmann J."/>
        </authorList>
    </citation>
    <scope>NUCLEOTIDE SEQUENCE [GENOMIC DNA]</scope>
</reference>
<evidence type="ECO:0000250" key="1"/>
<evidence type="ECO:0000305" key="2"/>
<proteinExistence type="inferred from homology"/>
<comment type="function">
    <text evidence="1">Sesquiterpene synthase.</text>
</comment>
<comment type="cofactor">
    <cofactor evidence="1">
        <name>Mg(2+)</name>
        <dbReference type="ChEBI" id="CHEBI:18420"/>
    </cofactor>
    <cofactor evidence="1">
        <name>Mn(2+)</name>
        <dbReference type="ChEBI" id="CHEBI:29035"/>
    </cofactor>
    <text evidence="1">Binds 3 Mg(2+) or Mn(2+) ions per subunit.</text>
</comment>
<comment type="miscellaneous">
    <text>The oil-deficient phenotype of this species is not due to the absence of the genes encoding enzymes for santalene biosynthesis.</text>
</comment>
<comment type="similarity">
    <text evidence="2">Belongs to the terpene synthase family. Tpsa subfamily.</text>
</comment>
<accession>F6M8H7</accession>
<dbReference type="EC" id="4.2.3.-"/>
<dbReference type="EMBL" id="JF746810">
    <property type="protein sequence ID" value="AEF32537.1"/>
    <property type="molecule type" value="Genomic_DNA"/>
</dbReference>
<dbReference type="SMR" id="F6M8H7"/>
<dbReference type="GO" id="GO:0000287">
    <property type="term" value="F:magnesium ion binding"/>
    <property type="evidence" value="ECO:0007669"/>
    <property type="project" value="InterPro"/>
</dbReference>
<dbReference type="GO" id="GO:0010333">
    <property type="term" value="F:terpene synthase activity"/>
    <property type="evidence" value="ECO:0007669"/>
    <property type="project" value="InterPro"/>
</dbReference>
<dbReference type="GO" id="GO:0016102">
    <property type="term" value="P:diterpenoid biosynthetic process"/>
    <property type="evidence" value="ECO:0007669"/>
    <property type="project" value="InterPro"/>
</dbReference>
<dbReference type="CDD" id="cd00684">
    <property type="entry name" value="Terpene_cyclase_plant_C1"/>
    <property type="match status" value="1"/>
</dbReference>
<dbReference type="FunFam" id="1.10.600.10:FF:000007">
    <property type="entry name" value="Isoprene synthase, chloroplastic"/>
    <property type="match status" value="1"/>
</dbReference>
<dbReference type="FunFam" id="1.50.10.130:FF:000001">
    <property type="entry name" value="Isoprene synthase, chloroplastic"/>
    <property type="match status" value="1"/>
</dbReference>
<dbReference type="Gene3D" id="1.10.600.10">
    <property type="entry name" value="Farnesyl Diphosphate Synthase"/>
    <property type="match status" value="1"/>
</dbReference>
<dbReference type="Gene3D" id="1.50.10.130">
    <property type="entry name" value="Terpene synthase, N-terminal domain"/>
    <property type="match status" value="1"/>
</dbReference>
<dbReference type="InterPro" id="IPR008949">
    <property type="entry name" value="Isoprenoid_synthase_dom_sf"/>
</dbReference>
<dbReference type="InterPro" id="IPR034741">
    <property type="entry name" value="Terpene_cyclase-like_1_C"/>
</dbReference>
<dbReference type="InterPro" id="IPR044814">
    <property type="entry name" value="Terpene_cyclase_plant_C1"/>
</dbReference>
<dbReference type="InterPro" id="IPR001906">
    <property type="entry name" value="Terpene_synth_N"/>
</dbReference>
<dbReference type="InterPro" id="IPR036965">
    <property type="entry name" value="Terpene_synth_N_sf"/>
</dbReference>
<dbReference type="InterPro" id="IPR050148">
    <property type="entry name" value="Terpene_synthase-like"/>
</dbReference>
<dbReference type="InterPro" id="IPR005630">
    <property type="entry name" value="Terpene_synthase_metal-bd"/>
</dbReference>
<dbReference type="InterPro" id="IPR008930">
    <property type="entry name" value="Terpenoid_cyclase/PrenylTrfase"/>
</dbReference>
<dbReference type="PANTHER" id="PTHR31225:SF251">
    <property type="entry name" value="(-)-GERMACRENE D SYNTHASE-LIKE ISOFORM X2"/>
    <property type="match status" value="1"/>
</dbReference>
<dbReference type="PANTHER" id="PTHR31225">
    <property type="entry name" value="OS04G0344100 PROTEIN-RELATED"/>
    <property type="match status" value="1"/>
</dbReference>
<dbReference type="Pfam" id="PF01397">
    <property type="entry name" value="Terpene_synth"/>
    <property type="match status" value="1"/>
</dbReference>
<dbReference type="Pfam" id="PF03936">
    <property type="entry name" value="Terpene_synth_C"/>
    <property type="match status" value="1"/>
</dbReference>
<dbReference type="SFLD" id="SFLDG01019">
    <property type="entry name" value="Terpene_Cyclase_Like_1_C_Termi"/>
    <property type="match status" value="1"/>
</dbReference>
<dbReference type="SFLD" id="SFLDG01604">
    <property type="entry name" value="Terpene_Cyclase_Like_1_C_Termi"/>
    <property type="match status" value="1"/>
</dbReference>
<dbReference type="SUPFAM" id="SSF48239">
    <property type="entry name" value="Terpenoid cyclases/Protein prenyltransferases"/>
    <property type="match status" value="1"/>
</dbReference>
<dbReference type="SUPFAM" id="SSF48576">
    <property type="entry name" value="Terpenoid synthases"/>
    <property type="match status" value="1"/>
</dbReference>
<feature type="chain" id="PRO_0000419328" description="Probable sesquiterpene synthase">
    <location>
        <begin position="1"/>
        <end position="562"/>
    </location>
</feature>
<feature type="short sequence motif" description="DDXXD motif">
    <location>
        <begin position="315"/>
        <end position="319"/>
    </location>
</feature>
<feature type="binding site" evidence="1">
    <location>
        <position position="315"/>
    </location>
    <ligand>
        <name>Mg(2+)</name>
        <dbReference type="ChEBI" id="CHEBI:18420"/>
        <label>1</label>
    </ligand>
</feature>
<feature type="binding site" evidence="1">
    <location>
        <position position="315"/>
    </location>
    <ligand>
        <name>Mg(2+)</name>
        <dbReference type="ChEBI" id="CHEBI:18420"/>
        <label>2</label>
    </ligand>
</feature>
<feature type="binding site" evidence="1">
    <location>
        <position position="319"/>
    </location>
    <ligand>
        <name>Mg(2+)</name>
        <dbReference type="ChEBI" id="CHEBI:18420"/>
        <label>1</label>
    </ligand>
</feature>
<feature type="binding site" evidence="1">
    <location>
        <position position="319"/>
    </location>
    <ligand>
        <name>Mg(2+)</name>
        <dbReference type="ChEBI" id="CHEBI:18420"/>
        <label>2</label>
    </ligand>
</feature>
<feature type="binding site" evidence="1">
    <location>
        <position position="467"/>
    </location>
    <ligand>
        <name>Mg(2+)</name>
        <dbReference type="ChEBI" id="CHEBI:18420"/>
        <label>3</label>
    </ligand>
</feature>
<organism>
    <name type="scientific">Santalum murrayanum</name>
    <name type="common">Bitter quandong</name>
    <dbReference type="NCBI Taxonomy" id="453085"/>
    <lineage>
        <taxon>Eukaryota</taxon>
        <taxon>Viridiplantae</taxon>
        <taxon>Streptophyta</taxon>
        <taxon>Embryophyta</taxon>
        <taxon>Tracheophyta</taxon>
        <taxon>Spermatophyta</taxon>
        <taxon>Magnoliopsida</taxon>
        <taxon>eudicotyledons</taxon>
        <taxon>Gunneridae</taxon>
        <taxon>Pentapetalae</taxon>
        <taxon>Santalales</taxon>
        <taxon>Santalaceae</taxon>
        <taxon>Santalum</taxon>
    </lineage>
</organism>
<sequence length="562" mass="65838">MENQKMPISSVPNLKDLNMISRPIANFPPSIWGDRFINYTCEDENDQTQKERQVEELKEQVRRELAATVDKPLQQLNIIDATQRLGIAYLFENEIEESLKHIYLHTYVENNCFEGSDDLYSVALWFRLLRQNGYKVSCDVFNKFRDNEGNFKNNLMEDAKGLLELYEATHVSIHGEEMLDDALEFTKTRLESVVSHLNYPLAEQVRHALYQPLHRGLPRLEAVYFFRIYEAHASHNKALLKLAKLDFNLLQSFHKKELSDIARWWKSLDFAAKFPFARDRLVEGYFWVLGVYFEPQYSLARKIIIKVFTMISTIDDIYDAYGTLDELKLFTKAMQRWDVGSLDQLPEYMKPCYKSILDVYNEIEEEMANQGSLFRMHYAKEVMKTIVEGYMDEAKWCHEKYVPTFQEYMSVALVTSGYTFLTTISYLGMGEIASKEAFDWLFSHPPVIEASESVGRLMDDMRSHKFEQERGHVASGIECYMKQYGVTEEEAHDEFRKRLVKAWKDINEECLRPYRVPKPLLTRILNLTRVIDVIYKNEDGYTHVKKAMKDNIASLLIDPVIV</sequence>
<gene>
    <name type="primary">STPS</name>
</gene>